<sequence>MRNEIQNETAQTDQTQGSMFSFFNLFPFLLPMFEVIKMVVASVASVVYLGFAGVTLSGSAVALAVSTPLFIIFSPILLPAIAATTVLAAGLGSKKVAAAPAASPSLSLLGIPESIKPSNVIPESIKPSNIIPESIKPSNIIPVSIKPSNIKDKIKDTIGKVKNKIKAKQEEKSKGKSEDSSKGKGKSKGEDTTTDEDKHGKGESKHGKGESKHGKGESTHGKGGKHGSEGSSMDEGKHGGKHGSGGSPMGGGKHGSGGKHESGGSPMGGGKHGSGGKHESGGASMGGGKHESVGKHGSGGKHESGGSPMGGGKHGSGGKHESGGASMGGGKHGSGGRHEGGGSAMGGGKHGSGGKHGSEGKHGGEGSSMGKNSLSKNKKEFHYRGQAMDASSTSESSDGSSSDGSSSDGSSSDGSSHGSGGKHI</sequence>
<proteinExistence type="evidence at protein level"/>
<feature type="chain" id="PRO_0000284754" description="Oleosin-B3">
    <location>
        <begin position="1"/>
        <end position="424"/>
    </location>
</feature>
<feature type="chain" id="PRO_0000284755" description="Pollen coat protein B3" evidence="6">
    <location>
        <begin position="109"/>
        <end position="424"/>
    </location>
</feature>
<feature type="transmembrane region" description="Helical" evidence="3">
    <location>
        <begin position="16"/>
        <end position="36"/>
    </location>
</feature>
<feature type="transmembrane region" description="Helical" evidence="3">
    <location>
        <begin position="38"/>
        <end position="58"/>
    </location>
</feature>
<feature type="transmembrane region" description="Helical" evidence="3">
    <location>
        <begin position="69"/>
        <end position="89"/>
    </location>
</feature>
<feature type="repeat" description="1-1" evidence="5">
    <location>
        <begin position="111"/>
        <end position="120"/>
    </location>
</feature>
<feature type="repeat" description="1-2" evidence="5">
    <location>
        <begin position="121"/>
        <end position="130"/>
    </location>
</feature>
<feature type="repeat" description="1-3" evidence="5">
    <location>
        <begin position="131"/>
        <end position="140"/>
    </location>
</feature>
<feature type="repeat" description="1-4" evidence="5">
    <location>
        <begin position="141"/>
        <end position="150"/>
    </location>
</feature>
<feature type="repeat" description="2-1" evidence="5">
    <location>
        <begin position="196"/>
        <end position="202"/>
    </location>
</feature>
<feature type="repeat" description="2-2" evidence="5">
    <location>
        <begin position="203"/>
        <end position="209"/>
    </location>
</feature>
<feature type="repeat" description="2-3" evidence="5">
    <location>
        <begin position="210"/>
        <end position="216"/>
    </location>
</feature>
<feature type="repeat" description="2-4" evidence="5">
    <location>
        <begin position="217"/>
        <end position="223"/>
    </location>
</feature>
<feature type="repeat" description="3-1" evidence="5">
    <location>
        <begin position="241"/>
        <end position="258"/>
    </location>
</feature>
<feature type="repeat" description="3-2" evidence="5">
    <location>
        <begin position="259"/>
        <end position="276"/>
    </location>
</feature>
<feature type="repeat" description="3-3" evidence="5">
    <location>
        <begin position="277"/>
        <end position="294"/>
    </location>
</feature>
<feature type="repeat" description="3-4" evidence="5">
    <location>
        <begin position="301"/>
        <end position="318"/>
    </location>
</feature>
<feature type="repeat" description="3-5" evidence="5">
    <location>
        <begin position="319"/>
        <end position="336"/>
    </location>
</feature>
<feature type="repeat" description="3-6" evidence="5">
    <location>
        <begin position="337"/>
        <end position="354"/>
    </location>
</feature>
<feature type="repeat" description="4-1" evidence="5">
    <location>
        <begin position="396"/>
        <end position="400"/>
    </location>
</feature>
<feature type="repeat" description="4-2" evidence="5">
    <location>
        <begin position="401"/>
        <end position="405"/>
    </location>
</feature>
<feature type="repeat" description="4-3" evidence="5">
    <location>
        <begin position="406"/>
        <end position="410"/>
    </location>
</feature>
<feature type="repeat" description="4-4" evidence="5">
    <location>
        <begin position="411"/>
        <end position="415"/>
    </location>
</feature>
<feature type="region of interest" description="Polar" evidence="3">
    <location>
        <begin position="1"/>
        <end position="37"/>
    </location>
</feature>
<feature type="region of interest" description="Hydrophobic" evidence="3">
    <location>
        <begin position="38"/>
        <end position="119"/>
    </location>
</feature>
<feature type="region of interest" description="4 X 10 AA tandem repeats of I-P-[EV]-S-I-K-P-S-N-[IV]" evidence="5">
    <location>
        <begin position="111"/>
        <end position="150"/>
    </location>
</feature>
<feature type="region of interest" description="Disordered" evidence="4">
    <location>
        <begin position="164"/>
        <end position="424"/>
    </location>
</feature>
<feature type="region of interest" description="4 X 7 AA tandem repeats of E-[SD]-[KT]-H-G-K-G" evidence="5">
    <location>
        <begin position="196"/>
        <end position="223"/>
    </location>
</feature>
<feature type="region of interest" description="6 X 18 AA tandem repeats of [KR]-H-[EG]-[SG]-G-G-[SA]-[PSA]-M-G-G-G-K-H-[GE]-S-[GV]-G" evidence="5">
    <location>
        <begin position="241"/>
        <end position="354"/>
    </location>
</feature>
<feature type="region of interest" description="4 X 5 AA tandem repeats of S-S-D-G-S" evidence="5">
    <location>
        <begin position="396"/>
        <end position="415"/>
    </location>
</feature>
<feature type="compositionally biased region" description="Basic and acidic residues" evidence="4">
    <location>
        <begin position="167"/>
        <end position="220"/>
    </location>
</feature>
<feature type="compositionally biased region" description="Gly residues" evidence="4">
    <location>
        <begin position="242"/>
        <end position="255"/>
    </location>
</feature>
<feature type="compositionally biased region" description="Basic and acidic residues" evidence="4">
    <location>
        <begin position="288"/>
        <end position="304"/>
    </location>
</feature>
<feature type="compositionally biased region" description="Gly residues" evidence="4">
    <location>
        <begin position="341"/>
        <end position="355"/>
    </location>
</feature>
<feature type="compositionally biased region" description="Low complexity" evidence="4">
    <location>
        <begin position="391"/>
        <end position="416"/>
    </location>
</feature>
<gene>
    <name evidence="8" type="primary">OlnB3</name>
    <name evidence="10" type="synonym">STA 41-2</name>
</gene>
<comment type="function">
    <text evidence="6 7">Many of the major pollen coat proteins are derived from endoproteolytic cleavage of oleosin-like proteins.</text>
</comment>
<comment type="subcellular location">
    <subcellularLocation>
        <location evidence="1">Lipid droplet</location>
    </subcellularLocation>
    <subcellularLocation>
        <location evidence="1">Membrane</location>
        <topology evidence="1">Multi-pass membrane protein</topology>
    </subcellularLocation>
    <text evidence="2">Surface of oil bodies. Oleosins exist at a monolayer lipid/water interface (By similarity).</text>
</comment>
<comment type="tissue specificity">
    <text evidence="5 7">The full-length protein is found in the tapetal lipid bodies of immature anthers, the proteolytically cleaved C-terminal product is found on the coats of pollen grains. No expression is detected in other flower organs, siliques or seedlings.</text>
</comment>
<comment type="developmental stage">
    <text evidence="5 6 7">Only expressed in early developing buds and anthers, mRNA is first detected in 2-3 mm buds, expression levels peak in 4-5 mm buds and are absent in later stages of development.</text>
</comment>
<comment type="similarity">
    <text evidence="3">Belongs to the oleosin family.</text>
</comment>
<protein>
    <recommendedName>
        <fullName>Oleosin-B3</fullName>
    </recommendedName>
    <component>
        <recommendedName>
            <fullName>Pollen coat protein B3</fullName>
        </recommendedName>
    </component>
</protein>
<organism>
    <name type="scientific">Brassica napus</name>
    <name type="common">Rape</name>
    <dbReference type="NCBI Taxonomy" id="3708"/>
    <lineage>
        <taxon>Eukaryota</taxon>
        <taxon>Viridiplantae</taxon>
        <taxon>Streptophyta</taxon>
        <taxon>Embryophyta</taxon>
        <taxon>Tracheophyta</taxon>
        <taxon>Spermatophyta</taxon>
        <taxon>Magnoliopsida</taxon>
        <taxon>eudicotyledons</taxon>
        <taxon>Gunneridae</taxon>
        <taxon>Pentapetalae</taxon>
        <taxon>rosids</taxon>
        <taxon>malvids</taxon>
        <taxon>Brassicales</taxon>
        <taxon>Brassicaceae</taxon>
        <taxon>Brassiceae</taxon>
        <taxon>Brassica</taxon>
    </lineage>
</organism>
<accession>Q42626</accession>
<name>OLNB3_BRANA</name>
<dbReference type="EMBL" id="L33282">
    <property type="protein sequence ID" value="AAA70400.1"/>
    <property type="molecule type" value="mRNA"/>
</dbReference>
<dbReference type="PIR" id="T08093">
    <property type="entry name" value="T08093"/>
</dbReference>
<dbReference type="RefSeq" id="NP_001303026.1">
    <property type="nucleotide sequence ID" value="NM_001316097.1"/>
</dbReference>
<dbReference type="SMR" id="Q42626"/>
<dbReference type="GeneID" id="106449581"/>
<dbReference type="KEGG" id="bna:106449581"/>
<dbReference type="OrthoDB" id="1114075at2759"/>
<dbReference type="GO" id="GO:0016020">
    <property type="term" value="C:membrane"/>
    <property type="evidence" value="ECO:0007669"/>
    <property type="project" value="UniProtKB-SubCell"/>
</dbReference>
<dbReference type="GO" id="GO:0012511">
    <property type="term" value="C:monolayer-surrounded lipid storage body"/>
    <property type="evidence" value="ECO:0007669"/>
    <property type="project" value="InterPro"/>
</dbReference>
<dbReference type="GO" id="GO:0009791">
    <property type="term" value="P:post-embryonic development"/>
    <property type="evidence" value="ECO:0007669"/>
    <property type="project" value="UniProtKB-ARBA"/>
</dbReference>
<dbReference type="GO" id="GO:0048608">
    <property type="term" value="P:reproductive structure development"/>
    <property type="evidence" value="ECO:0007669"/>
    <property type="project" value="UniProtKB-ARBA"/>
</dbReference>
<dbReference type="InterPro" id="IPR000136">
    <property type="entry name" value="Oleosin"/>
</dbReference>
<dbReference type="PANTHER" id="PTHR33203">
    <property type="entry name" value="OLEOSIN"/>
    <property type="match status" value="1"/>
</dbReference>
<dbReference type="PANTHER" id="PTHR33203:SF57">
    <property type="entry name" value="OLEOSIN"/>
    <property type="match status" value="1"/>
</dbReference>
<dbReference type="Pfam" id="PF01277">
    <property type="entry name" value="Oleosin"/>
    <property type="match status" value="1"/>
</dbReference>
<dbReference type="PROSITE" id="PS00811">
    <property type="entry name" value="OLEOSINS"/>
    <property type="match status" value="1"/>
</dbReference>
<evidence type="ECO:0000250" key="1"/>
<evidence type="ECO:0000250" key="2">
    <source>
        <dbReference type="UniProtKB" id="P29526"/>
    </source>
</evidence>
<evidence type="ECO:0000255" key="3"/>
<evidence type="ECO:0000256" key="4">
    <source>
        <dbReference type="SAM" id="MobiDB-lite"/>
    </source>
</evidence>
<evidence type="ECO:0000269" key="5">
    <source>
    </source>
</evidence>
<evidence type="ECO:0000269" key="6">
    <source>
    </source>
</evidence>
<evidence type="ECO:0000269" key="7">
    <source>
    </source>
</evidence>
<evidence type="ECO:0000303" key="8">
    <source>
    </source>
</evidence>
<evidence type="ECO:0000305" key="9"/>
<evidence type="ECO:0000312" key="10">
    <source>
        <dbReference type="EMBL" id="AAA70400.1"/>
    </source>
</evidence>
<keyword id="KW-0903">Direct protein sequencing</keyword>
<keyword id="KW-0551">Lipid droplet</keyword>
<keyword id="KW-0472">Membrane</keyword>
<keyword id="KW-0677">Repeat</keyword>
<keyword id="KW-0812">Transmembrane</keyword>
<keyword id="KW-1133">Transmembrane helix</keyword>
<reference evidence="9 10" key="1">
    <citation type="journal article" date="1994" name="Plant J.">
        <title>Molecular characterization of two Brassica napus genes related to oleosins which are highly expressed in the tapetum.</title>
        <authorList>
            <person name="Robert L.S."/>
            <person name="Gerster J."/>
            <person name="Allard S."/>
            <person name="Cass L."/>
            <person name="Simmonds J."/>
        </authorList>
    </citation>
    <scope>NUCLEOTIDE SEQUENCE [MRNA]</scope>
    <scope>TISSUE SPECIFICITY</scope>
    <scope>DEVELOPMENTAL STAGE</scope>
    <source>
        <strain evidence="10">cv. Westar</strain>
        <tissue evidence="10">Tapetum</tissue>
    </source>
</reference>
<reference evidence="9" key="2">
    <citation type="journal article" date="1998" name="Plant J.">
        <title>Biosynthesis, targeting and processing of oleosin-like proteins, which are major pollen coat components in Brassica napus.</title>
        <authorList>
            <person name="Murphy D.J."/>
            <person name="Ross J.H.E."/>
        </authorList>
    </citation>
    <scope>PROTEIN SEQUENCE OF 1-10 AND 109-129</scope>
    <scope>FUNCTION</scope>
    <scope>TISSUE SPECIFICITY</scope>
    <scope>DEVELOPMENTAL STAGE</scope>
    <source>
        <strain evidence="7">cv. Topas</strain>
        <tissue evidence="7">Pollen</tissue>
    </source>
</reference>
<reference evidence="9" key="3">
    <citation type="journal article" date="1996" name="Plant J.">
        <title>Characterization of anther-expressed genes encoding a major class of extracellular oleosin-like proteins in the pollen coat of Brassicaceae.</title>
        <authorList>
            <person name="Ross J.H.E."/>
            <person name="Murphy D.J."/>
        </authorList>
    </citation>
    <scope>PROTEIN SEQUENCE OF 109-128</scope>
    <scope>FUNCTION</scope>
    <scope>DEVELOPMENTAL STAGE</scope>
    <source>
        <strain evidence="6">cv. Topas</strain>
        <tissue evidence="6">Pollen</tissue>
    </source>
</reference>